<name>CRRS9_ARATH</name>
<comment type="subcellular location">
    <subcellularLocation>
        <location evidence="4">Secreted</location>
    </subcellularLocation>
</comment>
<comment type="similarity">
    <text evidence="4">Belongs to the cysteine-rich repeat secretory protein family.</text>
</comment>
<comment type="sequence caution" evidence="4">
    <conflict type="erroneous gene model prediction">
        <sequence resource="EMBL-CDS" id="AAF19714"/>
    </conflict>
</comment>
<reference key="1">
    <citation type="journal article" date="2000" name="Nature">
        <title>Sequence and analysis of chromosome 1 of the plant Arabidopsis thaliana.</title>
        <authorList>
            <person name="Theologis A."/>
            <person name="Ecker J.R."/>
            <person name="Palm C.J."/>
            <person name="Federspiel N.A."/>
            <person name="Kaul S."/>
            <person name="White O."/>
            <person name="Alonso J."/>
            <person name="Altafi H."/>
            <person name="Araujo R."/>
            <person name="Bowman C.L."/>
            <person name="Brooks S.Y."/>
            <person name="Buehler E."/>
            <person name="Chan A."/>
            <person name="Chao Q."/>
            <person name="Chen H."/>
            <person name="Cheuk R.F."/>
            <person name="Chin C.W."/>
            <person name="Chung M.K."/>
            <person name="Conn L."/>
            <person name="Conway A.B."/>
            <person name="Conway A.R."/>
            <person name="Creasy T.H."/>
            <person name="Dewar K."/>
            <person name="Dunn P."/>
            <person name="Etgu P."/>
            <person name="Feldblyum T.V."/>
            <person name="Feng J.-D."/>
            <person name="Fong B."/>
            <person name="Fujii C.Y."/>
            <person name="Gill J.E."/>
            <person name="Goldsmith A.D."/>
            <person name="Haas B."/>
            <person name="Hansen N.F."/>
            <person name="Hughes B."/>
            <person name="Huizar L."/>
            <person name="Hunter J.L."/>
            <person name="Jenkins J."/>
            <person name="Johnson-Hopson C."/>
            <person name="Khan S."/>
            <person name="Khaykin E."/>
            <person name="Kim C.J."/>
            <person name="Koo H.L."/>
            <person name="Kremenetskaia I."/>
            <person name="Kurtz D.B."/>
            <person name="Kwan A."/>
            <person name="Lam B."/>
            <person name="Langin-Hooper S."/>
            <person name="Lee A."/>
            <person name="Lee J.M."/>
            <person name="Lenz C.A."/>
            <person name="Li J.H."/>
            <person name="Li Y.-P."/>
            <person name="Lin X."/>
            <person name="Liu S.X."/>
            <person name="Liu Z.A."/>
            <person name="Luros J.S."/>
            <person name="Maiti R."/>
            <person name="Marziali A."/>
            <person name="Militscher J."/>
            <person name="Miranda M."/>
            <person name="Nguyen M."/>
            <person name="Nierman W.C."/>
            <person name="Osborne B.I."/>
            <person name="Pai G."/>
            <person name="Peterson J."/>
            <person name="Pham P.K."/>
            <person name="Rizzo M."/>
            <person name="Rooney T."/>
            <person name="Rowley D."/>
            <person name="Sakano H."/>
            <person name="Salzberg S.L."/>
            <person name="Schwartz J.R."/>
            <person name="Shinn P."/>
            <person name="Southwick A.M."/>
            <person name="Sun H."/>
            <person name="Tallon L.J."/>
            <person name="Tambunga G."/>
            <person name="Toriumi M.J."/>
            <person name="Town C.D."/>
            <person name="Utterback T."/>
            <person name="Van Aken S."/>
            <person name="Vaysberg M."/>
            <person name="Vysotskaia V.S."/>
            <person name="Walker M."/>
            <person name="Wu D."/>
            <person name="Yu G."/>
            <person name="Fraser C.M."/>
            <person name="Venter J.C."/>
            <person name="Davis R.W."/>
        </authorList>
    </citation>
    <scope>NUCLEOTIDE SEQUENCE [LARGE SCALE GENOMIC DNA]</scope>
    <source>
        <strain>cv. Columbia</strain>
    </source>
</reference>
<reference key="2">
    <citation type="journal article" date="2017" name="Plant J.">
        <title>Araport11: a complete reannotation of the Arabidopsis thaliana reference genome.</title>
        <authorList>
            <person name="Cheng C.Y."/>
            <person name="Krishnakumar V."/>
            <person name="Chan A.P."/>
            <person name="Thibaud-Nissen F."/>
            <person name="Schobel S."/>
            <person name="Town C.D."/>
        </authorList>
    </citation>
    <scope>GENOME REANNOTATION</scope>
    <source>
        <strain>cv. Columbia</strain>
    </source>
</reference>
<reference key="3">
    <citation type="submission" date="2004-10" db="EMBL/GenBank/DDBJ databases">
        <title>Reconstruction of cDNA sequences for hypothetical genes in Arabidopsis thaliana from 5' and 3' RACE products.</title>
        <authorList>
            <person name="Xiao Y.-L."/>
            <person name="Underwood B.A."/>
            <person name="Moskal W.A. Jr."/>
            <person name="Wang W."/>
            <person name="Redman J.C."/>
            <person name="Wu H.C."/>
            <person name="Utterback T."/>
            <person name="Town C.D."/>
        </authorList>
    </citation>
    <scope>NUCLEOTIDE SEQUENCE [LARGE SCALE MRNA]</scope>
    <source>
        <strain>cv. Columbia</strain>
    </source>
</reference>
<reference key="4">
    <citation type="submission" date="2005-03" db="EMBL/GenBank/DDBJ databases">
        <authorList>
            <person name="Underwood B.A."/>
            <person name="Xiao Y.-L."/>
            <person name="Moskal W.A. Jr."/>
            <person name="Monaghan E.L."/>
            <person name="Wang W."/>
            <person name="Redman J.C."/>
            <person name="Wu H.C."/>
            <person name="Utterback T."/>
            <person name="Town C.D."/>
        </authorList>
    </citation>
    <scope>NUCLEOTIDE SEQUENCE [LARGE SCALE MRNA]</scope>
    <source>
        <strain>cv. Columbia</strain>
    </source>
</reference>
<reference key="5">
    <citation type="journal article" date="2001" name="Plant Physiol.">
        <title>A superfamily of proteins with novel cysteine-rich repeats.</title>
        <authorList>
            <person name="Chen Z."/>
        </authorList>
    </citation>
    <scope>GENE FAMILY ORGANIZATION</scope>
    <scope>NOMENCLATURE</scope>
</reference>
<organism>
    <name type="scientific">Arabidopsis thaliana</name>
    <name type="common">Mouse-ear cress</name>
    <dbReference type="NCBI Taxonomy" id="3702"/>
    <lineage>
        <taxon>Eukaryota</taxon>
        <taxon>Viridiplantae</taxon>
        <taxon>Streptophyta</taxon>
        <taxon>Embryophyta</taxon>
        <taxon>Tracheophyta</taxon>
        <taxon>Spermatophyta</taxon>
        <taxon>Magnoliopsida</taxon>
        <taxon>eudicotyledons</taxon>
        <taxon>Gunneridae</taxon>
        <taxon>Pentapetalae</taxon>
        <taxon>rosids</taxon>
        <taxon>malvids</taxon>
        <taxon>Brassicales</taxon>
        <taxon>Brassicaceae</taxon>
        <taxon>Camelineae</taxon>
        <taxon>Arabidopsis</taxon>
    </lineage>
</organism>
<protein>
    <recommendedName>
        <fullName>Cysteine-rich repeat secretory protein 9</fullName>
    </recommendedName>
</protein>
<feature type="signal peptide" evidence="1">
    <location>
        <begin position="1"/>
        <end position="27"/>
    </location>
</feature>
<feature type="chain" id="PRO_0000296137" description="Cysteine-rich repeat secretory protein 9">
    <location>
        <begin position="28"/>
        <end position="324"/>
    </location>
</feature>
<feature type="domain" description="Gnk2-homologous 1" evidence="2">
    <location>
        <begin position="29"/>
        <end position="132"/>
    </location>
</feature>
<feature type="domain" description="Gnk2-homologous 2" evidence="2">
    <location>
        <begin position="138"/>
        <end position="248"/>
    </location>
</feature>
<feature type="region of interest" description="Disordered" evidence="3">
    <location>
        <begin position="251"/>
        <end position="286"/>
    </location>
</feature>
<evidence type="ECO:0000255" key="1"/>
<evidence type="ECO:0000255" key="2">
    <source>
        <dbReference type="PROSITE-ProRule" id="PRU00806"/>
    </source>
</evidence>
<evidence type="ECO:0000256" key="3">
    <source>
        <dbReference type="SAM" id="MobiDB-lite"/>
    </source>
</evidence>
<evidence type="ECO:0000305" key="4"/>
<gene>
    <name type="primary">CRRSP9</name>
    <name type="ordered locus">At1g63550</name>
    <name type="ORF">F2K11.9</name>
</gene>
<accession>Q5Q0E2</accession>
<accession>Q9SH39</accession>
<sequence>MARIIITLTIPLFYFFFFSLLSHQTMSQPDHIFTVCNPTNNFTQTSSYETNRDTLLASLRESSSLGHYSNATEGLSPDTVHGMFLCRGDITTASCVDCVQTATTEIASNCTLNKRAVIYYDECMVRYSNVSFSSELEIVPSITIYSLRSAPNPTRFNQTLTEKFSELIFNVSSSSLVPYFVEDQERVTQSEGSYDLDTMVQCSPDLDIFNCTVCLRVAFFRISTCCGLPSYAKIFTPKCLLRFQTSVLLSPPPSPSAPPPRSPPPKSSPPSSLPQTPSPPLVFTPPQNVPNPSGSFSFNVLKGNVIFGRIVVTMTALVFALVDL</sequence>
<keyword id="KW-1185">Reference proteome</keyword>
<keyword id="KW-0677">Repeat</keyword>
<keyword id="KW-0964">Secreted</keyword>
<keyword id="KW-0732">Signal</keyword>
<dbReference type="EMBL" id="AC008047">
    <property type="protein sequence ID" value="AAF19714.1"/>
    <property type="status" value="ALT_SEQ"/>
    <property type="molecule type" value="Genomic_DNA"/>
</dbReference>
<dbReference type="EMBL" id="CP002684">
    <property type="protein sequence ID" value="AEE34112.1"/>
    <property type="molecule type" value="Genomic_DNA"/>
</dbReference>
<dbReference type="EMBL" id="AY800609">
    <property type="protein sequence ID" value="AAV68845.1"/>
    <property type="molecule type" value="mRNA"/>
</dbReference>
<dbReference type="EMBL" id="AY954768">
    <property type="protein sequence ID" value="AAX55094.1"/>
    <property type="molecule type" value="mRNA"/>
</dbReference>
<dbReference type="RefSeq" id="NP_176543.2">
    <property type="nucleotide sequence ID" value="NM_105033.2"/>
</dbReference>
<dbReference type="SMR" id="Q5Q0E2"/>
<dbReference type="iPTMnet" id="Q5Q0E2"/>
<dbReference type="PaxDb" id="3702-AT1G63550.1"/>
<dbReference type="EnsemblPlants" id="AT1G63550.1">
    <property type="protein sequence ID" value="AT1G63550.1"/>
    <property type="gene ID" value="AT1G63550"/>
</dbReference>
<dbReference type="GeneID" id="842660"/>
<dbReference type="Gramene" id="AT1G63550.1">
    <property type="protein sequence ID" value="AT1G63550.1"/>
    <property type="gene ID" value="AT1G63550"/>
</dbReference>
<dbReference type="KEGG" id="ath:AT1G63550"/>
<dbReference type="Araport" id="AT1G63550"/>
<dbReference type="TAIR" id="AT1G63550"/>
<dbReference type="HOGENOM" id="CLU_000288_35_0_1"/>
<dbReference type="InParanoid" id="Q5Q0E2"/>
<dbReference type="OMA" id="IRENCYN"/>
<dbReference type="PhylomeDB" id="Q5Q0E2"/>
<dbReference type="PRO" id="PR:Q5Q0E2"/>
<dbReference type="Proteomes" id="UP000006548">
    <property type="component" value="Chromosome 1"/>
</dbReference>
<dbReference type="ExpressionAtlas" id="Q5Q0E2">
    <property type="expression patterns" value="baseline and differential"/>
</dbReference>
<dbReference type="GO" id="GO:0005576">
    <property type="term" value="C:extracellular region"/>
    <property type="evidence" value="ECO:0007669"/>
    <property type="project" value="UniProtKB-SubCell"/>
</dbReference>
<dbReference type="CDD" id="cd23509">
    <property type="entry name" value="Gnk2-like"/>
    <property type="match status" value="2"/>
</dbReference>
<dbReference type="FunFam" id="3.30.430.20:FF:000003">
    <property type="entry name" value="Cysteine-rich RLK (RECEPTOR-like protein kinase) 10"/>
    <property type="match status" value="1"/>
</dbReference>
<dbReference type="Gene3D" id="3.30.430.20">
    <property type="entry name" value="Gnk2 domain, C-X8-C-X2-C motif"/>
    <property type="match status" value="2"/>
</dbReference>
<dbReference type="InterPro" id="IPR002902">
    <property type="entry name" value="GNK2"/>
</dbReference>
<dbReference type="InterPro" id="IPR038408">
    <property type="entry name" value="GNK2_sf"/>
</dbReference>
<dbReference type="PANTHER" id="PTHR32099">
    <property type="entry name" value="CYSTEINE-RICH REPEAT SECRETORY PROTEIN"/>
    <property type="match status" value="1"/>
</dbReference>
<dbReference type="PANTHER" id="PTHR32099:SF41">
    <property type="entry name" value="CYSTEINE-RICH REPEAT SECRETORY PROTEIN 4-RELATED"/>
    <property type="match status" value="1"/>
</dbReference>
<dbReference type="Pfam" id="PF01657">
    <property type="entry name" value="Stress-antifung"/>
    <property type="match status" value="2"/>
</dbReference>
<dbReference type="PROSITE" id="PS51473">
    <property type="entry name" value="GNK2"/>
    <property type="match status" value="2"/>
</dbReference>
<proteinExistence type="evidence at transcript level"/>